<dbReference type="EC" id="2.2.1.7" evidence="1"/>
<dbReference type="EMBL" id="CP001488">
    <property type="protein sequence ID" value="ACO00251.1"/>
    <property type="molecule type" value="Genomic_DNA"/>
</dbReference>
<dbReference type="RefSeq" id="WP_004686580.1">
    <property type="nucleotide sequence ID" value="NC_012441.1"/>
</dbReference>
<dbReference type="SMR" id="C0RHE3"/>
<dbReference type="GeneID" id="29594346"/>
<dbReference type="KEGG" id="bmi:BMEA_A0469"/>
<dbReference type="HOGENOM" id="CLU_009227_1_4_5"/>
<dbReference type="UniPathway" id="UPA00064">
    <property type="reaction ID" value="UER00091"/>
</dbReference>
<dbReference type="Proteomes" id="UP000001748">
    <property type="component" value="Chromosome I"/>
</dbReference>
<dbReference type="GO" id="GO:0008661">
    <property type="term" value="F:1-deoxy-D-xylulose-5-phosphate synthase activity"/>
    <property type="evidence" value="ECO:0007669"/>
    <property type="project" value="UniProtKB-UniRule"/>
</dbReference>
<dbReference type="GO" id="GO:0000287">
    <property type="term" value="F:magnesium ion binding"/>
    <property type="evidence" value="ECO:0007669"/>
    <property type="project" value="UniProtKB-UniRule"/>
</dbReference>
<dbReference type="GO" id="GO:0030976">
    <property type="term" value="F:thiamine pyrophosphate binding"/>
    <property type="evidence" value="ECO:0007669"/>
    <property type="project" value="UniProtKB-UniRule"/>
</dbReference>
<dbReference type="GO" id="GO:0052865">
    <property type="term" value="P:1-deoxy-D-xylulose 5-phosphate biosynthetic process"/>
    <property type="evidence" value="ECO:0007669"/>
    <property type="project" value="UniProtKB-UniPathway"/>
</dbReference>
<dbReference type="GO" id="GO:0019682">
    <property type="term" value="P:glyceraldehyde-3-phosphate metabolic process"/>
    <property type="evidence" value="ECO:0007669"/>
    <property type="project" value="UniProtKB-ARBA"/>
</dbReference>
<dbReference type="GO" id="GO:0016114">
    <property type="term" value="P:terpenoid biosynthetic process"/>
    <property type="evidence" value="ECO:0007669"/>
    <property type="project" value="UniProtKB-UniRule"/>
</dbReference>
<dbReference type="GO" id="GO:0009228">
    <property type="term" value="P:thiamine biosynthetic process"/>
    <property type="evidence" value="ECO:0007669"/>
    <property type="project" value="UniProtKB-UniRule"/>
</dbReference>
<dbReference type="CDD" id="cd02007">
    <property type="entry name" value="TPP_DXS"/>
    <property type="match status" value="1"/>
</dbReference>
<dbReference type="CDD" id="cd07033">
    <property type="entry name" value="TPP_PYR_DXS_TK_like"/>
    <property type="match status" value="1"/>
</dbReference>
<dbReference type="FunFam" id="3.40.50.920:FF:000002">
    <property type="entry name" value="1-deoxy-D-xylulose-5-phosphate synthase"/>
    <property type="match status" value="1"/>
</dbReference>
<dbReference type="FunFam" id="3.40.50.970:FF:000005">
    <property type="entry name" value="1-deoxy-D-xylulose-5-phosphate synthase"/>
    <property type="match status" value="1"/>
</dbReference>
<dbReference type="Gene3D" id="3.40.50.920">
    <property type="match status" value="1"/>
</dbReference>
<dbReference type="Gene3D" id="3.40.50.970">
    <property type="match status" value="2"/>
</dbReference>
<dbReference type="HAMAP" id="MF_00315">
    <property type="entry name" value="DXP_synth"/>
    <property type="match status" value="1"/>
</dbReference>
<dbReference type="InterPro" id="IPR005477">
    <property type="entry name" value="Dxylulose-5-P_synthase"/>
</dbReference>
<dbReference type="InterPro" id="IPR029061">
    <property type="entry name" value="THDP-binding"/>
</dbReference>
<dbReference type="InterPro" id="IPR009014">
    <property type="entry name" value="Transketo_C/PFOR_II"/>
</dbReference>
<dbReference type="InterPro" id="IPR005475">
    <property type="entry name" value="Transketolase-like_Pyr-bd"/>
</dbReference>
<dbReference type="InterPro" id="IPR020826">
    <property type="entry name" value="Transketolase_BS"/>
</dbReference>
<dbReference type="InterPro" id="IPR033248">
    <property type="entry name" value="Transketolase_C"/>
</dbReference>
<dbReference type="InterPro" id="IPR049557">
    <property type="entry name" value="Transketolase_CS"/>
</dbReference>
<dbReference type="NCBIfam" id="TIGR00204">
    <property type="entry name" value="dxs"/>
    <property type="match status" value="1"/>
</dbReference>
<dbReference type="NCBIfam" id="NF003933">
    <property type="entry name" value="PRK05444.2-2"/>
    <property type="match status" value="1"/>
</dbReference>
<dbReference type="PANTHER" id="PTHR43322">
    <property type="entry name" value="1-D-DEOXYXYLULOSE 5-PHOSPHATE SYNTHASE-RELATED"/>
    <property type="match status" value="1"/>
</dbReference>
<dbReference type="PANTHER" id="PTHR43322:SF5">
    <property type="entry name" value="1-DEOXY-D-XYLULOSE-5-PHOSPHATE SYNTHASE, CHLOROPLASTIC"/>
    <property type="match status" value="1"/>
</dbReference>
<dbReference type="Pfam" id="PF13292">
    <property type="entry name" value="DXP_synthase_N"/>
    <property type="match status" value="1"/>
</dbReference>
<dbReference type="Pfam" id="PF02779">
    <property type="entry name" value="Transket_pyr"/>
    <property type="match status" value="1"/>
</dbReference>
<dbReference type="Pfam" id="PF02780">
    <property type="entry name" value="Transketolase_C"/>
    <property type="match status" value="1"/>
</dbReference>
<dbReference type="SMART" id="SM00861">
    <property type="entry name" value="Transket_pyr"/>
    <property type="match status" value="1"/>
</dbReference>
<dbReference type="SUPFAM" id="SSF52518">
    <property type="entry name" value="Thiamin diphosphate-binding fold (THDP-binding)"/>
    <property type="match status" value="2"/>
</dbReference>
<dbReference type="SUPFAM" id="SSF52922">
    <property type="entry name" value="TK C-terminal domain-like"/>
    <property type="match status" value="1"/>
</dbReference>
<dbReference type="PROSITE" id="PS00801">
    <property type="entry name" value="TRANSKETOLASE_1"/>
    <property type="match status" value="1"/>
</dbReference>
<dbReference type="PROSITE" id="PS00802">
    <property type="entry name" value="TRANSKETOLASE_2"/>
    <property type="match status" value="1"/>
</dbReference>
<gene>
    <name evidence="1" type="primary">dxs</name>
    <name type="ordered locus">BMEA_A0469</name>
</gene>
<name>DXS_BRUMB</name>
<keyword id="KW-0414">Isoprene biosynthesis</keyword>
<keyword id="KW-0460">Magnesium</keyword>
<keyword id="KW-0479">Metal-binding</keyword>
<keyword id="KW-0784">Thiamine biosynthesis</keyword>
<keyword id="KW-0786">Thiamine pyrophosphate</keyword>
<keyword id="KW-0808">Transferase</keyword>
<sequence length="643" mass="69186">MSRPSTPLLDKAPTPDRLRALPEQDLPQLAEELRTELIDAVSTTGGHLGAGLGVVELTVALHHVFNTPYDRIIWDVGHQAYPHKILTGRRDRIRTLRQAGGLSGFTKRAESEYDPFGAAHSSTSISAGLGMAVASELSGEKRNVIAVIGDGSMSAGMAYEAMNNAGALDARLIVILNDNDMSIAPPTGAMSAYLARLVSGRTYRSVREAAKQVAQKLPKFLQDKARKSEEYARAFFTGGTLFEELGFYYVGPIDGHNLDHLLPVLKNVRDTQKGPVLIHVVTQKGKGYAPAEAAADKYHGVNKFDVITGKQAKPPANAPSYTKIFGTSLIEEARHDDKIVAVTAAMPTGTGLDLFGEAFPKRVFDVGIAEQHAVTFAAGLASEGYKPFCAIYSTFLQRGYDQVVHDVSIQNLPVRFPIDRAGLVGADGPTHAGSFDTGFLAALPGFVVMAASDEAELRHMVRTAAEYDEGPISFRYPRGDGVGVDLPERGSVLEIGKGRIVREGTKVALLSFGTRLQECLAAAEELGAAGLSTTVADARFAKPLDHDLIRRLAREHEVLVMVEEGAVGGFGSHVLQFLATDGLLDRGFKVRALTLPDIYQDHGKPDAMYAEAGLDRTGIVRTVFAALHRDELGHEALPTPFRA</sequence>
<feature type="chain" id="PRO_1000132923" description="1-deoxy-D-xylulose-5-phosphate synthase">
    <location>
        <begin position="1"/>
        <end position="643"/>
    </location>
</feature>
<feature type="binding site" evidence="1">
    <location>
        <position position="78"/>
    </location>
    <ligand>
        <name>thiamine diphosphate</name>
        <dbReference type="ChEBI" id="CHEBI:58937"/>
    </ligand>
</feature>
<feature type="binding site" evidence="1">
    <location>
        <begin position="119"/>
        <end position="121"/>
    </location>
    <ligand>
        <name>thiamine diphosphate</name>
        <dbReference type="ChEBI" id="CHEBI:58937"/>
    </ligand>
</feature>
<feature type="binding site" evidence="1">
    <location>
        <position position="150"/>
    </location>
    <ligand>
        <name>Mg(2+)</name>
        <dbReference type="ChEBI" id="CHEBI:18420"/>
    </ligand>
</feature>
<feature type="binding site" evidence="1">
    <location>
        <begin position="151"/>
        <end position="152"/>
    </location>
    <ligand>
        <name>thiamine diphosphate</name>
        <dbReference type="ChEBI" id="CHEBI:58937"/>
    </ligand>
</feature>
<feature type="binding site" evidence="1">
    <location>
        <position position="179"/>
    </location>
    <ligand>
        <name>Mg(2+)</name>
        <dbReference type="ChEBI" id="CHEBI:18420"/>
    </ligand>
</feature>
<feature type="binding site" evidence="1">
    <location>
        <position position="179"/>
    </location>
    <ligand>
        <name>thiamine diphosphate</name>
        <dbReference type="ChEBI" id="CHEBI:58937"/>
    </ligand>
</feature>
<feature type="binding site" evidence="1">
    <location>
        <position position="288"/>
    </location>
    <ligand>
        <name>thiamine diphosphate</name>
        <dbReference type="ChEBI" id="CHEBI:58937"/>
    </ligand>
</feature>
<feature type="binding site" evidence="1">
    <location>
        <position position="370"/>
    </location>
    <ligand>
        <name>thiamine diphosphate</name>
        <dbReference type="ChEBI" id="CHEBI:58937"/>
    </ligand>
</feature>
<accession>C0RHE3</accession>
<reference key="1">
    <citation type="submission" date="2009-03" db="EMBL/GenBank/DDBJ databases">
        <title>Brucella melitensis ATCC 23457 whole genome shotgun sequencing project.</title>
        <authorList>
            <person name="Setubal J.C."/>
            <person name="Boyle S."/>
            <person name="Crasta O.R."/>
            <person name="Gillespie J.J."/>
            <person name="Kenyon R.W."/>
            <person name="Lu J."/>
            <person name="Mane S."/>
            <person name="Nagrani S."/>
            <person name="Shallom J.M."/>
            <person name="Shallom S."/>
            <person name="Shukla M."/>
            <person name="Snyder E.E."/>
            <person name="Sobral B.W."/>
            <person name="Wattam A.R."/>
            <person name="Will R."/>
            <person name="Williams K."/>
            <person name="Yoo H."/>
            <person name="Munk C."/>
            <person name="Tapia R."/>
            <person name="Han C."/>
            <person name="Detter J.C."/>
            <person name="Bruce D."/>
            <person name="Brettin T.S."/>
        </authorList>
    </citation>
    <scope>NUCLEOTIDE SEQUENCE [LARGE SCALE GENOMIC DNA]</scope>
    <source>
        <strain>ATCC 23457</strain>
    </source>
</reference>
<organism>
    <name type="scientific">Brucella melitensis biotype 2 (strain ATCC 23457)</name>
    <dbReference type="NCBI Taxonomy" id="546272"/>
    <lineage>
        <taxon>Bacteria</taxon>
        <taxon>Pseudomonadati</taxon>
        <taxon>Pseudomonadota</taxon>
        <taxon>Alphaproteobacteria</taxon>
        <taxon>Hyphomicrobiales</taxon>
        <taxon>Brucellaceae</taxon>
        <taxon>Brucella/Ochrobactrum group</taxon>
        <taxon>Brucella</taxon>
    </lineage>
</organism>
<proteinExistence type="inferred from homology"/>
<evidence type="ECO:0000255" key="1">
    <source>
        <dbReference type="HAMAP-Rule" id="MF_00315"/>
    </source>
</evidence>
<protein>
    <recommendedName>
        <fullName evidence="1">1-deoxy-D-xylulose-5-phosphate synthase</fullName>
        <ecNumber evidence="1">2.2.1.7</ecNumber>
    </recommendedName>
    <alternativeName>
        <fullName evidence="1">1-deoxyxylulose-5-phosphate synthase</fullName>
        <shortName evidence="1">DXP synthase</shortName>
        <shortName evidence="1">DXPS</shortName>
    </alternativeName>
</protein>
<comment type="function">
    <text evidence="1">Catalyzes the acyloin condensation reaction between C atoms 2 and 3 of pyruvate and glyceraldehyde 3-phosphate to yield 1-deoxy-D-xylulose-5-phosphate (DXP).</text>
</comment>
<comment type="catalytic activity">
    <reaction evidence="1">
        <text>D-glyceraldehyde 3-phosphate + pyruvate + H(+) = 1-deoxy-D-xylulose 5-phosphate + CO2</text>
        <dbReference type="Rhea" id="RHEA:12605"/>
        <dbReference type="ChEBI" id="CHEBI:15361"/>
        <dbReference type="ChEBI" id="CHEBI:15378"/>
        <dbReference type="ChEBI" id="CHEBI:16526"/>
        <dbReference type="ChEBI" id="CHEBI:57792"/>
        <dbReference type="ChEBI" id="CHEBI:59776"/>
        <dbReference type="EC" id="2.2.1.7"/>
    </reaction>
</comment>
<comment type="cofactor">
    <cofactor evidence="1">
        <name>Mg(2+)</name>
        <dbReference type="ChEBI" id="CHEBI:18420"/>
    </cofactor>
    <text evidence="1">Binds 1 Mg(2+) ion per subunit.</text>
</comment>
<comment type="cofactor">
    <cofactor evidence="1">
        <name>thiamine diphosphate</name>
        <dbReference type="ChEBI" id="CHEBI:58937"/>
    </cofactor>
    <text evidence="1">Binds 1 thiamine pyrophosphate per subunit.</text>
</comment>
<comment type="pathway">
    <text evidence="1">Metabolic intermediate biosynthesis; 1-deoxy-D-xylulose 5-phosphate biosynthesis; 1-deoxy-D-xylulose 5-phosphate from D-glyceraldehyde 3-phosphate and pyruvate: step 1/1.</text>
</comment>
<comment type="subunit">
    <text evidence="1">Homodimer.</text>
</comment>
<comment type="similarity">
    <text evidence="1">Belongs to the transketolase family. DXPS subfamily.</text>
</comment>